<reference key="1">
    <citation type="journal article" date="1999" name="Nature">
        <title>Sequence and analysis of chromosome 4 of the plant Arabidopsis thaliana.</title>
        <authorList>
            <person name="Mayer K.F.X."/>
            <person name="Schueller C."/>
            <person name="Wambutt R."/>
            <person name="Murphy G."/>
            <person name="Volckaert G."/>
            <person name="Pohl T."/>
            <person name="Duesterhoeft A."/>
            <person name="Stiekema W."/>
            <person name="Entian K.-D."/>
            <person name="Terryn N."/>
            <person name="Harris B."/>
            <person name="Ansorge W."/>
            <person name="Brandt P."/>
            <person name="Grivell L.A."/>
            <person name="Rieger M."/>
            <person name="Weichselgartner M."/>
            <person name="de Simone V."/>
            <person name="Obermaier B."/>
            <person name="Mache R."/>
            <person name="Mueller M."/>
            <person name="Kreis M."/>
            <person name="Delseny M."/>
            <person name="Puigdomenech P."/>
            <person name="Watson M."/>
            <person name="Schmidtheini T."/>
            <person name="Reichert B."/>
            <person name="Portetelle D."/>
            <person name="Perez-Alonso M."/>
            <person name="Boutry M."/>
            <person name="Bancroft I."/>
            <person name="Vos P."/>
            <person name="Hoheisel J."/>
            <person name="Zimmermann W."/>
            <person name="Wedler H."/>
            <person name="Ridley P."/>
            <person name="Langham S.-A."/>
            <person name="McCullagh B."/>
            <person name="Bilham L."/>
            <person name="Robben J."/>
            <person name="van der Schueren J."/>
            <person name="Grymonprez B."/>
            <person name="Chuang Y.-J."/>
            <person name="Vandenbussche F."/>
            <person name="Braeken M."/>
            <person name="Weltjens I."/>
            <person name="Voet M."/>
            <person name="Bastiaens I."/>
            <person name="Aert R."/>
            <person name="Defoor E."/>
            <person name="Weitzenegger T."/>
            <person name="Bothe G."/>
            <person name="Ramsperger U."/>
            <person name="Hilbert H."/>
            <person name="Braun M."/>
            <person name="Holzer E."/>
            <person name="Brandt A."/>
            <person name="Peters S."/>
            <person name="van Staveren M."/>
            <person name="Dirkse W."/>
            <person name="Mooijman P."/>
            <person name="Klein Lankhorst R."/>
            <person name="Rose M."/>
            <person name="Hauf J."/>
            <person name="Koetter P."/>
            <person name="Berneiser S."/>
            <person name="Hempel S."/>
            <person name="Feldpausch M."/>
            <person name="Lamberth S."/>
            <person name="Van den Daele H."/>
            <person name="De Keyser A."/>
            <person name="Buysshaert C."/>
            <person name="Gielen J."/>
            <person name="Villarroel R."/>
            <person name="De Clercq R."/>
            <person name="van Montagu M."/>
            <person name="Rogers J."/>
            <person name="Cronin A."/>
            <person name="Quail M.A."/>
            <person name="Bray-Allen S."/>
            <person name="Clark L."/>
            <person name="Doggett J."/>
            <person name="Hall S."/>
            <person name="Kay M."/>
            <person name="Lennard N."/>
            <person name="McLay K."/>
            <person name="Mayes R."/>
            <person name="Pettett A."/>
            <person name="Rajandream M.A."/>
            <person name="Lyne M."/>
            <person name="Benes V."/>
            <person name="Rechmann S."/>
            <person name="Borkova D."/>
            <person name="Bloecker H."/>
            <person name="Scharfe M."/>
            <person name="Grimm M."/>
            <person name="Loehnert T.-H."/>
            <person name="Dose S."/>
            <person name="de Haan M."/>
            <person name="Maarse A.C."/>
            <person name="Schaefer M."/>
            <person name="Mueller-Auer S."/>
            <person name="Gabel C."/>
            <person name="Fuchs M."/>
            <person name="Fartmann B."/>
            <person name="Granderath K."/>
            <person name="Dauner D."/>
            <person name="Herzl A."/>
            <person name="Neumann S."/>
            <person name="Argiriou A."/>
            <person name="Vitale D."/>
            <person name="Liguori R."/>
            <person name="Piravandi E."/>
            <person name="Massenet O."/>
            <person name="Quigley F."/>
            <person name="Clabauld G."/>
            <person name="Muendlein A."/>
            <person name="Felber R."/>
            <person name="Schnabl S."/>
            <person name="Hiller R."/>
            <person name="Schmidt W."/>
            <person name="Lecharny A."/>
            <person name="Aubourg S."/>
            <person name="Chefdor F."/>
            <person name="Cooke R."/>
            <person name="Berger C."/>
            <person name="Monfort A."/>
            <person name="Casacuberta E."/>
            <person name="Gibbons T."/>
            <person name="Weber N."/>
            <person name="Vandenbol M."/>
            <person name="Bargues M."/>
            <person name="Terol J."/>
            <person name="Torres A."/>
            <person name="Perez-Perez A."/>
            <person name="Purnelle B."/>
            <person name="Bent E."/>
            <person name="Johnson S."/>
            <person name="Tacon D."/>
            <person name="Jesse T."/>
            <person name="Heijnen L."/>
            <person name="Schwarz S."/>
            <person name="Scholler P."/>
            <person name="Heber S."/>
            <person name="Francs P."/>
            <person name="Bielke C."/>
            <person name="Frishman D."/>
            <person name="Haase D."/>
            <person name="Lemcke K."/>
            <person name="Mewes H.-W."/>
            <person name="Stocker S."/>
            <person name="Zaccaria P."/>
            <person name="Bevan M."/>
            <person name="Wilson R.K."/>
            <person name="de la Bastide M."/>
            <person name="Habermann K."/>
            <person name="Parnell L."/>
            <person name="Dedhia N."/>
            <person name="Gnoj L."/>
            <person name="Schutz K."/>
            <person name="Huang E."/>
            <person name="Spiegel L."/>
            <person name="Sekhon M."/>
            <person name="Murray J."/>
            <person name="Sheet P."/>
            <person name="Cordes M."/>
            <person name="Abu-Threideh J."/>
            <person name="Stoneking T."/>
            <person name="Kalicki J."/>
            <person name="Graves T."/>
            <person name="Harmon G."/>
            <person name="Edwards J."/>
            <person name="Latreille P."/>
            <person name="Courtney L."/>
            <person name="Cloud J."/>
            <person name="Abbott A."/>
            <person name="Scott K."/>
            <person name="Johnson D."/>
            <person name="Minx P."/>
            <person name="Bentley D."/>
            <person name="Fulton B."/>
            <person name="Miller N."/>
            <person name="Greco T."/>
            <person name="Kemp K."/>
            <person name="Kramer J."/>
            <person name="Fulton L."/>
            <person name="Mardis E."/>
            <person name="Dante M."/>
            <person name="Pepin K."/>
            <person name="Hillier L.W."/>
            <person name="Nelson J."/>
            <person name="Spieth J."/>
            <person name="Ryan E."/>
            <person name="Andrews S."/>
            <person name="Geisel C."/>
            <person name="Layman D."/>
            <person name="Du H."/>
            <person name="Ali J."/>
            <person name="Berghoff A."/>
            <person name="Jones K."/>
            <person name="Drone K."/>
            <person name="Cotton M."/>
            <person name="Joshu C."/>
            <person name="Antonoiu B."/>
            <person name="Zidanic M."/>
            <person name="Strong C."/>
            <person name="Sun H."/>
            <person name="Lamar B."/>
            <person name="Yordan C."/>
            <person name="Ma P."/>
            <person name="Zhong J."/>
            <person name="Preston R."/>
            <person name="Vil D."/>
            <person name="Shekher M."/>
            <person name="Matero A."/>
            <person name="Shah R."/>
            <person name="Swaby I.K."/>
            <person name="O'Shaughnessy A."/>
            <person name="Rodriguez M."/>
            <person name="Hoffman J."/>
            <person name="Till S."/>
            <person name="Granat S."/>
            <person name="Shohdy N."/>
            <person name="Hasegawa A."/>
            <person name="Hameed A."/>
            <person name="Lodhi M."/>
            <person name="Johnson A."/>
            <person name="Chen E."/>
            <person name="Marra M.A."/>
            <person name="Martienssen R."/>
            <person name="McCombie W.R."/>
        </authorList>
    </citation>
    <scope>NUCLEOTIDE SEQUENCE [LARGE SCALE GENOMIC DNA]</scope>
    <source>
        <strain>cv. Columbia</strain>
    </source>
</reference>
<reference key="2">
    <citation type="journal article" date="2017" name="Plant J.">
        <title>Araport11: a complete reannotation of the Arabidopsis thaliana reference genome.</title>
        <authorList>
            <person name="Cheng C.Y."/>
            <person name="Krishnakumar V."/>
            <person name="Chan A.P."/>
            <person name="Thibaud-Nissen F."/>
            <person name="Schobel S."/>
            <person name="Town C.D."/>
        </authorList>
    </citation>
    <scope>GENOME REANNOTATION</scope>
    <source>
        <strain>cv. Columbia</strain>
    </source>
</reference>
<reference key="3">
    <citation type="submission" date="2005-03" db="EMBL/GenBank/DDBJ databases">
        <title>Large-scale analysis of RIKEN Arabidopsis full-length (RAFL) cDNAs.</title>
        <authorList>
            <person name="Totoki Y."/>
            <person name="Seki M."/>
            <person name="Ishida J."/>
            <person name="Nakajima M."/>
            <person name="Enju A."/>
            <person name="Kamiya A."/>
            <person name="Narusaka M."/>
            <person name="Shin-i T."/>
            <person name="Nakagawa M."/>
            <person name="Sakamoto N."/>
            <person name="Oishi K."/>
            <person name="Kohara Y."/>
            <person name="Kobayashi M."/>
            <person name="Toyoda A."/>
            <person name="Sakaki Y."/>
            <person name="Sakurai T."/>
            <person name="Iida K."/>
            <person name="Akiyama K."/>
            <person name="Satou M."/>
            <person name="Toyoda T."/>
            <person name="Konagaya A."/>
            <person name="Carninci P."/>
            <person name="Kawai J."/>
            <person name="Hayashizaki Y."/>
            <person name="Shinozaki K."/>
        </authorList>
    </citation>
    <scope>NUCLEOTIDE SEQUENCE [LARGE SCALE MRNA] (ISOFORM 1)</scope>
    <source>
        <strain>cv. Columbia</strain>
    </source>
</reference>
<reference key="4">
    <citation type="journal article" date="2007" name="Plant Cell">
        <title>Methylation of gibberellins by Arabidopsis GAMT1 and GAMT2.</title>
        <authorList>
            <person name="Varbanova M."/>
            <person name="Yamaguchi S."/>
            <person name="Yang Y."/>
            <person name="McKelvey K."/>
            <person name="Hanada A."/>
            <person name="Borochov R."/>
            <person name="Yu F."/>
            <person name="Jikumaru Y."/>
            <person name="Ross J."/>
            <person name="Cortes D."/>
            <person name="Ma C.J."/>
            <person name="Noel J.P."/>
            <person name="Mander L."/>
            <person name="Shulaev V."/>
            <person name="Kamiya Y."/>
            <person name="Rodermel S."/>
            <person name="Weiss D."/>
            <person name="Pichersky E."/>
        </authorList>
    </citation>
    <scope>FUNCTION</scope>
    <scope>CATALYTIC ACTIVITY</scope>
    <scope>BIOPHYSICOCHEMICAL PROPERTIES</scope>
    <scope>ACTIVITY REGULATION</scope>
    <scope>TISSUE SPECIFICITY</scope>
    <scope>DEVELOPMENTAL STAGE</scope>
    <scope>DISRUPTION PHENOTYPE</scope>
    <source>
        <strain>cv. Columbia</strain>
    </source>
</reference>
<gene>
    <name type="primary">GAMT1</name>
    <name type="ordered locus">At4g26420</name>
    <name type="ORF">M3E9.150</name>
</gene>
<protein>
    <recommendedName>
        <fullName>Gibberellic acid methyltransferase 1</fullName>
    </recommendedName>
    <alternativeName>
        <fullName>Gibberellin A(9) O-methyltransferase</fullName>
        <ecNumber>2.1.1.275</ecNumber>
    </alternativeName>
</protein>
<accession>F4JUY5</accession>
<accession>B3H6L1</accession>
<accession>O65592</accession>
<accession>Q56Z47</accession>
<name>GAMT1_ARATH</name>
<keyword id="KW-0025">Alternative splicing</keyword>
<keyword id="KW-0460">Magnesium</keyword>
<keyword id="KW-0479">Metal-binding</keyword>
<keyword id="KW-0489">Methyltransferase</keyword>
<keyword id="KW-1185">Reference proteome</keyword>
<keyword id="KW-0949">S-adenosyl-L-methionine</keyword>
<keyword id="KW-0808">Transferase</keyword>
<feature type="chain" id="PRO_0000422310" description="Gibberellic acid methyltransferase 1">
    <location>
        <begin position="1"/>
        <end position="376"/>
    </location>
</feature>
<feature type="binding site" evidence="3">
    <location>
        <position position="22"/>
    </location>
    <ligand>
        <name>S-adenosyl-L-homocysteine</name>
        <dbReference type="ChEBI" id="CHEBI:57856"/>
    </ligand>
</feature>
<feature type="binding site" evidence="3">
    <location>
        <position position="64"/>
    </location>
    <ligand>
        <name>S-adenosyl-L-homocysteine</name>
        <dbReference type="ChEBI" id="CHEBI:57856"/>
    </ligand>
</feature>
<feature type="binding site" evidence="3">
    <location>
        <position position="69"/>
    </location>
    <ligand>
        <name>S-adenosyl-L-homocysteine</name>
        <dbReference type="ChEBI" id="CHEBI:57856"/>
    </ligand>
</feature>
<feature type="binding site" evidence="3">
    <location>
        <position position="104"/>
    </location>
    <ligand>
        <name>S-adenosyl-L-homocysteine</name>
        <dbReference type="ChEBI" id="CHEBI:57856"/>
    </ligand>
</feature>
<feature type="binding site" evidence="2">
    <location>
        <position position="105"/>
    </location>
    <ligand>
        <name>S-adenosyl-L-homocysteine</name>
        <dbReference type="ChEBI" id="CHEBI:57856"/>
    </ligand>
</feature>
<feature type="binding site" evidence="3">
    <location>
        <position position="136"/>
    </location>
    <ligand>
        <name>S-adenosyl-L-homocysteine</name>
        <dbReference type="ChEBI" id="CHEBI:57856"/>
    </ligand>
</feature>
<feature type="binding site" evidence="3">
    <location>
        <position position="137"/>
    </location>
    <ligand>
        <name>S-adenosyl-L-homocysteine</name>
        <dbReference type="ChEBI" id="CHEBI:57856"/>
    </ligand>
</feature>
<feature type="binding site" evidence="3">
    <location>
        <position position="158"/>
    </location>
    <ligand>
        <name>gibberellin A9</name>
        <dbReference type="ChEBI" id="CHEBI:73255"/>
    </ligand>
</feature>
<feature type="binding site" evidence="4">
    <location>
        <position position="175"/>
    </location>
    <ligand>
        <name>Mg(2+)</name>
        <dbReference type="ChEBI" id="CHEBI:18420"/>
    </ligand>
</feature>
<feature type="binding site" evidence="1">
    <location>
        <position position="179"/>
    </location>
    <ligand>
        <name>Mg(2+)</name>
        <dbReference type="ChEBI" id="CHEBI:18420"/>
    </ligand>
</feature>
<feature type="binding site" evidence="1">
    <location>
        <position position="265"/>
    </location>
    <ligand>
        <name>Mg(2+)</name>
        <dbReference type="ChEBI" id="CHEBI:18420"/>
    </ligand>
</feature>
<feature type="binding site" evidence="4">
    <location>
        <position position="266"/>
    </location>
    <ligand>
        <name>Mg(2+)</name>
        <dbReference type="ChEBI" id="CHEBI:18420"/>
    </ligand>
</feature>
<feature type="binding site" evidence="4">
    <location>
        <position position="268"/>
    </location>
    <ligand>
        <name>Mg(2+)</name>
        <dbReference type="ChEBI" id="CHEBI:18420"/>
    </ligand>
</feature>
<feature type="binding site" evidence="4">
    <location>
        <position position="269"/>
    </location>
    <ligand>
        <name>Mg(2+)</name>
        <dbReference type="ChEBI" id="CHEBI:18420"/>
    </ligand>
</feature>
<feature type="splice variant" id="VSP_046497" description="In isoform 2." evidence="6">
    <location>
        <begin position="1"/>
        <end position="12"/>
    </location>
</feature>
<feature type="splice variant" id="VSP_046498" description="In isoform 2." evidence="6">
    <original>GLIEEEKRDGFNIPVYFRTT</original>
    <variation>LVKGFNRRGEERWFQHSGVL</variation>
    <location>
        <begin position="258"/>
        <end position="277"/>
    </location>
</feature>
<feature type="splice variant" id="VSP_046499" description="In isoform 2." evidence="6">
    <location>
        <begin position="278"/>
        <end position="376"/>
    </location>
</feature>
<feature type="sequence conflict" description="In Ref. 3; BAD95064." evidence="6" ref="3">
    <original>R</original>
    <variation>A</variation>
    <location>
        <position position="32"/>
    </location>
</feature>
<proteinExistence type="evidence at protein level"/>
<dbReference type="EC" id="2.1.1.275"/>
<dbReference type="EMBL" id="AL022223">
    <property type="protein sequence ID" value="CAA18228.1"/>
    <property type="status" value="ALT_SEQ"/>
    <property type="molecule type" value="Genomic_DNA"/>
</dbReference>
<dbReference type="EMBL" id="AL161565">
    <property type="protein sequence ID" value="CAB79497.1"/>
    <property type="status" value="ALT_SEQ"/>
    <property type="molecule type" value="Genomic_DNA"/>
</dbReference>
<dbReference type="EMBL" id="CP002687">
    <property type="protein sequence ID" value="AEE85196.1"/>
    <property type="molecule type" value="Genomic_DNA"/>
</dbReference>
<dbReference type="EMBL" id="CP002687">
    <property type="protein sequence ID" value="AEE85197.1"/>
    <property type="molecule type" value="Genomic_DNA"/>
</dbReference>
<dbReference type="EMBL" id="AK221122">
    <property type="protein sequence ID" value="BAD95064.1"/>
    <property type="molecule type" value="mRNA"/>
</dbReference>
<dbReference type="PIR" id="T05062">
    <property type="entry name" value="T05062"/>
</dbReference>
<dbReference type="RefSeq" id="NP_001119061.1">
    <molecule id="F4JUY5-2"/>
    <property type="nucleotide sequence ID" value="NM_001125589.5"/>
</dbReference>
<dbReference type="RefSeq" id="NP_194372.2">
    <molecule id="F4JUY5-1"/>
    <property type="nucleotide sequence ID" value="NM_118775.3"/>
</dbReference>
<dbReference type="SMR" id="F4JUY5"/>
<dbReference type="FunCoup" id="F4JUY5">
    <property type="interactions" value="4"/>
</dbReference>
<dbReference type="STRING" id="3702.F4JUY5"/>
<dbReference type="PaxDb" id="3702-AT4G26420.1"/>
<dbReference type="ProteomicsDB" id="228961">
    <molecule id="F4JUY5-1"/>
</dbReference>
<dbReference type="EnsemblPlants" id="AT4G26420.1">
    <molecule id="F4JUY5-1"/>
    <property type="protein sequence ID" value="AT4G26420.1"/>
    <property type="gene ID" value="AT4G26420"/>
</dbReference>
<dbReference type="EnsemblPlants" id="AT4G26420.2">
    <molecule id="F4JUY5-2"/>
    <property type="protein sequence ID" value="AT4G26420.2"/>
    <property type="gene ID" value="AT4G26420"/>
</dbReference>
<dbReference type="GeneID" id="828748"/>
<dbReference type="Gramene" id="AT4G26420.1">
    <molecule id="F4JUY5-1"/>
    <property type="protein sequence ID" value="AT4G26420.1"/>
    <property type="gene ID" value="AT4G26420"/>
</dbReference>
<dbReference type="Gramene" id="AT4G26420.2">
    <molecule id="F4JUY5-2"/>
    <property type="protein sequence ID" value="AT4G26420.2"/>
    <property type="gene ID" value="AT4G26420"/>
</dbReference>
<dbReference type="KEGG" id="ath:AT4G26420"/>
<dbReference type="Araport" id="AT4G26420"/>
<dbReference type="TAIR" id="AT4G26420">
    <property type="gene designation" value="GAMT1"/>
</dbReference>
<dbReference type="eggNOG" id="ENOG502QQYU">
    <property type="taxonomic scope" value="Eukaryota"/>
</dbReference>
<dbReference type="InParanoid" id="F4JUY5"/>
<dbReference type="OMA" id="HERESFN"/>
<dbReference type="BioCyc" id="MetaCyc:AT4G26420-MONOMER"/>
<dbReference type="BRENDA" id="2.1.1.275">
    <property type="organism ID" value="399"/>
</dbReference>
<dbReference type="PRO" id="PR:F4JUY5"/>
<dbReference type="Proteomes" id="UP000006548">
    <property type="component" value="Chromosome 4"/>
</dbReference>
<dbReference type="ExpressionAtlas" id="F4JUY5">
    <property type="expression patterns" value="baseline and differential"/>
</dbReference>
<dbReference type="GO" id="GO:0102117">
    <property type="term" value="F:gibberellin A9 carboxyl methyltransferase activity"/>
    <property type="evidence" value="ECO:0007669"/>
    <property type="project" value="UniProtKB-EC"/>
</dbReference>
<dbReference type="GO" id="GO:0010341">
    <property type="term" value="F:gibberellin carboxyl-O-methyltransferase activity"/>
    <property type="evidence" value="ECO:0000314"/>
    <property type="project" value="TAIR"/>
</dbReference>
<dbReference type="GO" id="GO:0046872">
    <property type="term" value="F:metal ion binding"/>
    <property type="evidence" value="ECO:0007669"/>
    <property type="project" value="UniProtKB-KW"/>
</dbReference>
<dbReference type="GO" id="GO:0008757">
    <property type="term" value="F:S-adenosylmethionine-dependent methyltransferase activity"/>
    <property type="evidence" value="ECO:0000314"/>
    <property type="project" value="TAIR"/>
</dbReference>
<dbReference type="GO" id="GO:0032259">
    <property type="term" value="P:methylation"/>
    <property type="evidence" value="ECO:0007669"/>
    <property type="project" value="UniProtKB-KW"/>
</dbReference>
<dbReference type="Gene3D" id="1.10.1200.270">
    <property type="entry name" value="Methyltransferase, alpha-helical capping domain"/>
    <property type="match status" value="1"/>
</dbReference>
<dbReference type="Gene3D" id="3.40.50.150">
    <property type="entry name" value="Vaccinia Virus protein VP39"/>
    <property type="match status" value="1"/>
</dbReference>
<dbReference type="InterPro" id="IPR005299">
    <property type="entry name" value="MeTrfase_7"/>
</dbReference>
<dbReference type="InterPro" id="IPR042086">
    <property type="entry name" value="MeTrfase_capping"/>
</dbReference>
<dbReference type="InterPro" id="IPR029063">
    <property type="entry name" value="SAM-dependent_MTases_sf"/>
</dbReference>
<dbReference type="PANTHER" id="PTHR31009">
    <property type="entry name" value="S-ADENOSYL-L-METHIONINE:CARBOXYL METHYLTRANSFERASE FAMILY PROTEIN"/>
    <property type="match status" value="1"/>
</dbReference>
<dbReference type="Pfam" id="PF03492">
    <property type="entry name" value="Methyltransf_7"/>
    <property type="match status" value="1"/>
</dbReference>
<dbReference type="SUPFAM" id="SSF53335">
    <property type="entry name" value="S-adenosyl-L-methionine-dependent methyltransferases"/>
    <property type="match status" value="1"/>
</dbReference>
<sequence>MESSRSLEHVLSMQGGEDDASYVKNCYGPAARLALSKPMLTTAINSIKLTEGCSSHLKIADLGCAIGDNTFSTVETVVEVLGKKLAVIDGGTEPEMEFEVFFSDLSSNDFNALFRSLDEKVNGSSRKYFAAGVPGSFYKRLFPKGELHVVVTMSALQWLSQVPEKVMEKGSKSWNKGGVWIEGAEKEVVEAYAEQADKDLVEFLKCRKEEIVVGGVLFMLMGGRPSGSVNQIGDPDSSLKHPFTTLMDQAWQDLVDEGLIEEEKRDGFNIPVYFRTTEEIAAAIDRCGGFKIEKTENLIIADHMNGKQEELMKDPDSYGRDRANYAQAGLKPIVQAYLGPDLTHKLFKRYAVRAAADKEILNNCFYHMIAVSAVRV</sequence>
<organism>
    <name type="scientific">Arabidopsis thaliana</name>
    <name type="common">Mouse-ear cress</name>
    <dbReference type="NCBI Taxonomy" id="3702"/>
    <lineage>
        <taxon>Eukaryota</taxon>
        <taxon>Viridiplantae</taxon>
        <taxon>Streptophyta</taxon>
        <taxon>Embryophyta</taxon>
        <taxon>Tracheophyta</taxon>
        <taxon>Spermatophyta</taxon>
        <taxon>Magnoliopsida</taxon>
        <taxon>eudicotyledons</taxon>
        <taxon>Gunneridae</taxon>
        <taxon>Pentapetalae</taxon>
        <taxon>rosids</taxon>
        <taxon>malvids</taxon>
        <taxon>Brassicales</taxon>
        <taxon>Brassicaceae</taxon>
        <taxon>Camelineae</taxon>
        <taxon>Arabidopsis</taxon>
    </lineage>
</organism>
<evidence type="ECO:0000250" key="1"/>
<evidence type="ECO:0000250" key="2">
    <source>
        <dbReference type="UniProtKB" id="A0A6C0WW36"/>
    </source>
</evidence>
<evidence type="ECO:0000250" key="3">
    <source>
        <dbReference type="UniProtKB" id="B2KPR3"/>
    </source>
</evidence>
<evidence type="ECO:0000250" key="4">
    <source>
        <dbReference type="UniProtKB" id="Q9FLN8"/>
    </source>
</evidence>
<evidence type="ECO:0000269" key="5">
    <source>
    </source>
</evidence>
<evidence type="ECO:0000305" key="6"/>
<evidence type="ECO:0000305" key="7">
    <source>
    </source>
</evidence>
<comment type="function">
    <text evidence="5">Methylates the carboxyl group of several gibberellins (GAs). Substrate preference is GA9 &gt; GA20 &gt; GA3 &gt; GA4 &gt; GA34 &gt; GA51 &gt; GA1 &gt; GA19 &gt; GA12. No activity with diterpenes abietic acid and ent-kaurenoic acid.</text>
</comment>
<comment type="catalytic activity">
    <reaction evidence="5">
        <text>gibberellin A9 + S-adenosyl-L-methionine = O-methyl gibberellin A9 + S-adenosyl-L-homocysteine</text>
        <dbReference type="Rhea" id="RHEA:36119"/>
        <dbReference type="ChEBI" id="CHEBI:57856"/>
        <dbReference type="ChEBI" id="CHEBI:59789"/>
        <dbReference type="ChEBI" id="CHEBI:73255"/>
        <dbReference type="ChEBI" id="CHEBI:73256"/>
        <dbReference type="EC" id="2.1.1.275"/>
    </reaction>
</comment>
<comment type="cofactor">
    <cofactor evidence="1">
        <name>Mg(2+)</name>
        <dbReference type="ChEBI" id="CHEBI:18420"/>
    </cofactor>
    <text evidence="1">Binds 1 Mg(2+) ion per subunit.</text>
</comment>
<comment type="activity regulation">
    <text evidence="5">Up-regulated by K(+) and NH(4+), down-regulated by Zn(2+), Cu(2+), Fe(2+) and Fe(3+).</text>
</comment>
<comment type="biophysicochemical properties">
    <kinetics>
        <KM evidence="5">5.4 uM for GA4</KM>
        <KM evidence="5">15.8 uM for GA9</KM>
        <text>kcat is 0.01 sec(-1) for GA4. kcat is 0.026 sec(-1) for GA9.</text>
    </kinetics>
    <phDependence>
        <text evidence="5">Optimum pH is 7.5.</text>
    </phDependence>
</comment>
<comment type="alternative products">
    <event type="alternative splicing"/>
    <isoform>
        <id>F4JUY5-1</id>
        <name>1</name>
        <sequence type="displayed"/>
    </isoform>
    <isoform>
        <id>F4JUY5-2</id>
        <name>2</name>
        <sequence type="described" ref="VSP_046497 VSP_046498 VSP_046499"/>
    </isoform>
</comment>
<comment type="tissue specificity">
    <text evidence="5">Expressed in siliques, developing seeds, anthers and germinating seeds. Not detected in leaves, stems, flowers and roots.</text>
</comment>
<comment type="developmental stage">
    <text evidence="5">Expression begins at early stages of silique development, peaks in the second half of this process and decreases after the start of desiccation.</text>
</comment>
<comment type="disruption phenotype">
    <text evidence="5">No visible phenotype, even in gamt1 and gamt2 double mutants.</text>
</comment>
<comment type="miscellaneous">
    <text evidence="7">Overexpression of GAMT1 results in dwarf phenotype.</text>
</comment>
<comment type="similarity">
    <text evidence="6">Belongs to the methyltransferase superfamily. Type-7 methyltransferase family. SABATH subfamily.</text>
</comment>
<comment type="sequence caution" evidence="6">
    <conflict type="erroneous gene model prediction">
        <sequence resource="EMBL-CDS" id="CAA18228"/>
    </conflict>
</comment>
<comment type="sequence caution" evidence="6">
    <conflict type="erroneous gene model prediction">
        <sequence resource="EMBL-CDS" id="CAB79497"/>
    </conflict>
</comment>